<accession>Q0H8B9</accession>
<accession>Q0H8B7</accession>
<accession>Q0H8B8</accession>
<protein>
    <recommendedName>
        <fullName>C-type lectin domain family 2 member D11</fullName>
    </recommendedName>
    <alternativeName>
        <fullName>C-type lectin-related protein B</fullName>
        <shortName>Clr-b</shortName>
    </alternativeName>
    <alternativeName>
        <fullName>Lectin-like transmembrane protein</fullName>
    </alternativeName>
    <alternativeName>
        <fullName>Osteoclast inhibitory lectin</fullName>
    </alternativeName>
</protein>
<feature type="chain" id="PRO_0000315296" description="C-type lectin domain family 2 member D11">
    <location>
        <begin position="1"/>
        <end position="207"/>
    </location>
</feature>
<feature type="topological domain" description="Cytoplasmic" evidence="2">
    <location>
        <begin position="1"/>
        <end position="44"/>
    </location>
</feature>
<feature type="transmembrane region" description="Helical; Signal-anchor for type II membrane protein" evidence="2">
    <location>
        <begin position="45"/>
        <end position="65"/>
    </location>
</feature>
<feature type="topological domain" description="Extracellular" evidence="2">
    <location>
        <begin position="66"/>
        <end position="207"/>
    </location>
</feature>
<feature type="domain" description="C-type lectin" evidence="3">
    <location>
        <begin position="87"/>
        <end position="198"/>
    </location>
</feature>
<feature type="modified residue" description="Phosphoserine" evidence="6">
    <location>
        <position position="7"/>
    </location>
</feature>
<feature type="modified residue" description="Phosphoserine" evidence="6">
    <location>
        <position position="16"/>
    </location>
</feature>
<feature type="glycosylation site" description="N-linked (GlcNAc...) asparagine" evidence="2">
    <location>
        <position position="100"/>
    </location>
</feature>
<feature type="sequence conflict" description="In Ref. 2; ABA47205." evidence="5" ref="2">
    <original>G</original>
    <variation>E</variation>
    <location>
        <position position="20"/>
    </location>
</feature>
<feature type="sequence conflict" description="In Ref. 2; ABA47205." evidence="5" ref="2">
    <original>V</original>
    <variation>F</variation>
    <location>
        <position position="34"/>
    </location>
</feature>
<feature type="sequence conflict" description="In Ref. 2; ABA47205." evidence="5" ref="2">
    <original>Y</original>
    <variation>L</variation>
    <location>
        <position position="43"/>
    </location>
</feature>
<feature type="sequence conflict" description="In Ref. 2; ABA47205." evidence="5" ref="2">
    <original>G</original>
    <variation>A</variation>
    <location>
        <position position="47"/>
    </location>
</feature>
<feature type="sequence conflict" description="In Ref. 2; ABA47205." evidence="5" ref="2">
    <original>M</original>
    <variation>L</variation>
    <location>
        <position position="50"/>
    </location>
</feature>
<feature type="sequence conflict" description="In Ref. 2; ABA47205." evidence="5" ref="2">
    <original>S</original>
    <variation>T</variation>
    <location>
        <position position="53"/>
    </location>
</feature>
<feature type="sequence conflict" description="In Ref. 2; ABA47205." evidence="5" ref="2">
    <original>KMTPQIST</original>
    <variation>VKTEEISI</variation>
    <location>
        <begin position="66"/>
        <end position="73"/>
    </location>
</feature>
<feature type="sequence conflict" description="In Ref. 2; ABA47205." evidence="5" ref="2">
    <original>Y</original>
    <variation>N</variation>
    <location>
        <position position="93"/>
    </location>
</feature>
<feature type="sequence conflict" description="In Ref. 2; ABA47205." evidence="5" ref="2">
    <original>TE</original>
    <variation>NQ</variation>
    <location>
        <begin position="120"/>
        <end position="121"/>
    </location>
</feature>
<feature type="sequence conflict" description="In Ref. 2; ABA47206." evidence="5" ref="2">
    <original>K</original>
    <variation>R</variation>
    <location>
        <position position="192"/>
    </location>
</feature>
<feature type="strand" evidence="7">
    <location>
        <begin position="85"/>
        <end position="87"/>
    </location>
</feature>
<feature type="strand" evidence="7">
    <location>
        <begin position="90"/>
        <end position="94"/>
    </location>
</feature>
<feature type="helix" evidence="7">
    <location>
        <begin position="101"/>
        <end position="110"/>
    </location>
</feature>
<feature type="helix" evidence="7">
    <location>
        <begin position="121"/>
        <end position="130"/>
    </location>
</feature>
<feature type="strand" evidence="7">
    <location>
        <begin position="136"/>
        <end position="141"/>
    </location>
</feature>
<feature type="strand" evidence="7">
    <location>
        <begin position="143"/>
        <end position="147"/>
    </location>
</feature>
<feature type="strand" evidence="7">
    <location>
        <begin position="165"/>
        <end position="173"/>
    </location>
</feature>
<feature type="strand" evidence="7">
    <location>
        <begin position="176"/>
        <end position="180"/>
    </location>
</feature>
<feature type="strand" evidence="7">
    <location>
        <begin position="186"/>
        <end position="193"/>
    </location>
</feature>
<keyword id="KW-0002">3D-structure</keyword>
<keyword id="KW-1003">Cell membrane</keyword>
<keyword id="KW-0325">Glycoprotein</keyword>
<keyword id="KW-0430">Lectin</keyword>
<keyword id="KW-0472">Membrane</keyword>
<keyword id="KW-0597">Phosphoprotein</keyword>
<keyword id="KW-0675">Receptor</keyword>
<keyword id="KW-1185">Reference proteome</keyword>
<keyword id="KW-0735">Signal-anchor</keyword>
<keyword id="KW-0812">Transmembrane</keyword>
<keyword id="KW-1133">Transmembrane helix</keyword>
<sequence>MSAKKASQPMLNTTGSLQEGEMGKMFHGKCLRIVSPESPAKLYCCYGVIMVLSVAVVALSVALSVKMTPQISTINTYAACPRNWIGVGNKCFYFSEYASNWTFSQTFCKAQEAELARFDTEEELNFLSRYKGSFDYWIGLHRESSEHPWKWTDNTQYNYSLSIRGVERYAYLNDIGISSARVYADKRWSCSKLNSYSLQCKTPFSPM</sequence>
<evidence type="ECO:0000250" key="1"/>
<evidence type="ECO:0000255" key="2"/>
<evidence type="ECO:0000255" key="3">
    <source>
        <dbReference type="PROSITE-ProRule" id="PRU00040"/>
    </source>
</evidence>
<evidence type="ECO:0000269" key="4">
    <source>
    </source>
</evidence>
<evidence type="ECO:0000305" key="5"/>
<evidence type="ECO:0007744" key="6">
    <source>
    </source>
</evidence>
<evidence type="ECO:0007829" key="7">
    <source>
        <dbReference type="PDB" id="7ODU"/>
    </source>
</evidence>
<name>CL2DB_RAT</name>
<reference key="1">
    <citation type="journal article" date="2007" name="Immunity">
        <title>Cytomegalovirus evasion of innate immunity by subversion of the NKR-P1B:Ocil/Clr-b missing-self axis.</title>
        <authorList>
            <person name="Voigt S."/>
            <person name="Mesci A."/>
            <person name="Ettinger J."/>
            <person name="Fine J.H."/>
            <person name="Chen P."/>
            <person name="Chou W."/>
            <person name="Carlyle J.R."/>
        </authorList>
    </citation>
    <scope>NUCLEOTIDE SEQUENCE [MRNA]</scope>
    <scope>FUNCTION</scope>
    <scope>INDUCTION</scope>
    <source>
        <strain>Sprague-Dawley</strain>
    </source>
</reference>
<reference key="2">
    <citation type="submission" date="2005-08" db="EMBL/GenBank/DDBJ databases">
        <title>Polymorphism and expression of the rat homolog of the Ocil/Clrb gene.</title>
        <authorList>
            <person name="Hundrieser J."/>
            <person name="Wonigeit K."/>
        </authorList>
    </citation>
    <scope>NUCLEOTIDE SEQUENCE [MRNA]</scope>
    <source>
        <strain>Lewis</strain>
        <strain>TO</strain>
        <strain>WAG</strain>
    </source>
</reference>
<reference key="3">
    <citation type="journal article" date="2012" name="Nat. Commun.">
        <title>Quantitative maps of protein phosphorylation sites across 14 different rat organs and tissues.</title>
        <authorList>
            <person name="Lundby A."/>
            <person name="Secher A."/>
            <person name="Lage K."/>
            <person name="Nordsborg N.B."/>
            <person name="Dmytriyev A."/>
            <person name="Lundby C."/>
            <person name="Olsen J.V."/>
        </authorList>
    </citation>
    <scope>PHOSPHORYLATION [LARGE SCALE ANALYSIS] AT SER-7 AND SER-16</scope>
    <scope>IDENTIFICATION BY MASS SPECTROMETRY [LARGE SCALE ANALYSIS]</scope>
</reference>
<organism>
    <name type="scientific">Rattus norvegicus</name>
    <name type="common">Rat</name>
    <dbReference type="NCBI Taxonomy" id="10116"/>
    <lineage>
        <taxon>Eukaryota</taxon>
        <taxon>Metazoa</taxon>
        <taxon>Chordata</taxon>
        <taxon>Craniata</taxon>
        <taxon>Vertebrata</taxon>
        <taxon>Euteleostomi</taxon>
        <taxon>Mammalia</taxon>
        <taxon>Eutheria</taxon>
        <taxon>Euarchontoglires</taxon>
        <taxon>Glires</taxon>
        <taxon>Rodentia</taxon>
        <taxon>Myomorpha</taxon>
        <taxon>Muroidea</taxon>
        <taxon>Muridae</taxon>
        <taxon>Murinae</taxon>
        <taxon>Rattus</taxon>
    </lineage>
</organism>
<comment type="function">
    <text evidence="4">Receptor for KLRB1B that protects target cells against natural killer cell-mediated lysis.</text>
</comment>
<comment type="subcellular location">
    <subcellularLocation>
        <location evidence="1">Cell membrane</location>
        <topology evidence="1">Single-pass type II membrane protein</topology>
    </subcellularLocation>
</comment>
<comment type="induction">
    <text evidence="4">Down-regulated upon infection with rat cytomegalovirus.</text>
</comment>
<dbReference type="EMBL" id="EF100690">
    <property type="protein sequence ID" value="ABO15830.1"/>
    <property type="molecule type" value="mRNA"/>
</dbReference>
<dbReference type="EMBL" id="DQ168417">
    <property type="protein sequence ID" value="ABA47204.1"/>
    <property type="molecule type" value="mRNA"/>
</dbReference>
<dbReference type="EMBL" id="DQ168418">
    <property type="protein sequence ID" value="ABA47205.1"/>
    <property type="molecule type" value="mRNA"/>
</dbReference>
<dbReference type="EMBL" id="DQ168419">
    <property type="protein sequence ID" value="ABA47206.1"/>
    <property type="molecule type" value="mRNA"/>
</dbReference>
<dbReference type="RefSeq" id="NP_001041540.1">
    <property type="nucleotide sequence ID" value="NM_001048075.1"/>
</dbReference>
<dbReference type="PDB" id="7ODU">
    <property type="method" value="X-ray"/>
    <property type="resolution" value="3.00 A"/>
    <property type="chains" value="A/B=77-195"/>
</dbReference>
<dbReference type="PDB" id="8OUQ">
    <property type="method" value="X-ray"/>
    <property type="resolution" value="1.60 A"/>
    <property type="chains" value="AAA/BBB=77-195"/>
</dbReference>
<dbReference type="PDBsum" id="7ODU"/>
<dbReference type="PDBsum" id="8OUQ"/>
<dbReference type="SMR" id="Q0H8B9"/>
<dbReference type="FunCoup" id="Q0H8B9">
    <property type="interactions" value="170"/>
</dbReference>
<dbReference type="STRING" id="10116.ENSRNOP00000069630"/>
<dbReference type="GlyCosmos" id="Q0H8B9">
    <property type="glycosylation" value="1 site, No reported glycans"/>
</dbReference>
<dbReference type="GlyGen" id="Q0H8B9">
    <property type="glycosylation" value="1 site"/>
</dbReference>
<dbReference type="iPTMnet" id="Q0H8B9"/>
<dbReference type="PhosphoSitePlus" id="Q0H8B9"/>
<dbReference type="PaxDb" id="10116-ENSRNOP00000037388"/>
<dbReference type="GeneID" id="362447"/>
<dbReference type="KEGG" id="rno:362447"/>
<dbReference type="UCSC" id="RGD:1563148">
    <property type="organism name" value="rat"/>
</dbReference>
<dbReference type="AGR" id="RGD:1563148"/>
<dbReference type="CTD" id="70809"/>
<dbReference type="RGD" id="1563148">
    <property type="gene designation" value="RGD1563148"/>
</dbReference>
<dbReference type="VEuPathDB" id="HostDB:ENSRNOG00000059538"/>
<dbReference type="eggNOG" id="KOG4297">
    <property type="taxonomic scope" value="Eukaryota"/>
</dbReference>
<dbReference type="HOGENOM" id="CLU_049894_8_1_1"/>
<dbReference type="InParanoid" id="Q0H8B9"/>
<dbReference type="OrthoDB" id="86460at9989"/>
<dbReference type="TreeFam" id="TF351467"/>
<dbReference type="PRO" id="PR:Q0H8B9"/>
<dbReference type="Proteomes" id="UP000002494">
    <property type="component" value="Chromosome 4"/>
</dbReference>
<dbReference type="Bgee" id="ENSRNOG00000059538">
    <property type="expression patterns" value="Expressed in lung and 20 other cell types or tissues"/>
</dbReference>
<dbReference type="ExpressionAtlas" id="Q0H8B9">
    <property type="expression patterns" value="baseline and differential"/>
</dbReference>
<dbReference type="GO" id="GO:0009897">
    <property type="term" value="C:external side of plasma membrane"/>
    <property type="evidence" value="ECO:0000318"/>
    <property type="project" value="GO_Central"/>
</dbReference>
<dbReference type="GO" id="GO:0030246">
    <property type="term" value="F:carbohydrate binding"/>
    <property type="evidence" value="ECO:0007669"/>
    <property type="project" value="UniProtKB-KW"/>
</dbReference>
<dbReference type="GO" id="GO:0046703">
    <property type="term" value="F:natural killer cell lectin-like receptor binding"/>
    <property type="evidence" value="ECO:0000318"/>
    <property type="project" value="GO_Central"/>
</dbReference>
<dbReference type="CDD" id="cd03593">
    <property type="entry name" value="CLECT_NK_receptors_like"/>
    <property type="match status" value="1"/>
</dbReference>
<dbReference type="Gene3D" id="3.10.100.10">
    <property type="entry name" value="Mannose-Binding Protein A, subunit A"/>
    <property type="match status" value="1"/>
</dbReference>
<dbReference type="InterPro" id="IPR001304">
    <property type="entry name" value="C-type_lectin-like"/>
</dbReference>
<dbReference type="InterPro" id="IPR016186">
    <property type="entry name" value="C-type_lectin-like/link_sf"/>
</dbReference>
<dbReference type="InterPro" id="IPR050828">
    <property type="entry name" value="C-type_lectin/matrix_domain"/>
</dbReference>
<dbReference type="InterPro" id="IPR016187">
    <property type="entry name" value="CTDL_fold"/>
</dbReference>
<dbReference type="InterPro" id="IPR033992">
    <property type="entry name" value="NKR-like_CTLD"/>
</dbReference>
<dbReference type="PANTHER" id="PTHR45710:SF19">
    <property type="entry name" value="C-TYPE LECTIN DOMAIN FAMILY 2 MEMBER D-RELATED"/>
    <property type="match status" value="1"/>
</dbReference>
<dbReference type="PANTHER" id="PTHR45710">
    <property type="entry name" value="C-TYPE LECTIN DOMAIN-CONTAINING PROTEIN 180"/>
    <property type="match status" value="1"/>
</dbReference>
<dbReference type="Pfam" id="PF00059">
    <property type="entry name" value="Lectin_C"/>
    <property type="match status" value="1"/>
</dbReference>
<dbReference type="SMART" id="SM00034">
    <property type="entry name" value="CLECT"/>
    <property type="match status" value="1"/>
</dbReference>
<dbReference type="SUPFAM" id="SSF56436">
    <property type="entry name" value="C-type lectin-like"/>
    <property type="match status" value="1"/>
</dbReference>
<dbReference type="PROSITE" id="PS50041">
    <property type="entry name" value="C_TYPE_LECTIN_2"/>
    <property type="match status" value="1"/>
</dbReference>
<proteinExistence type="evidence at protein level"/>
<gene>
    <name type="primary">Clec2d11</name>
    <name type="synonym">Clrb</name>
    <name type="synonym">Ocil</name>
</gene>